<proteinExistence type="evidence at protein level"/>
<sequence>MDLPGNSSPFTQPSLCRQPLSRASWEARSPKRPRLQPLGTPSSLEKASRRVLAVVLEDVMTTNRVPLTHKEDTPSPLTHNHHQDPVCTQSPALPSQQVKWSMQARPPDPLHLCREPLTRARQSSPALRMRSRAASGPEESPSKKTDQVPQPTLVVVLEDIASGRQPAEGFDEDQPNLIVPAQSTFRSLKGPGKHCHRRGLDLEARPTLTLSLHPRAEPVTKAGQPMPTPSDLEPPFQLSTLPADPPESPVPDPALETPVIPTSSSLLRPRLSPWGLAPLFRSVRSKLESFADIFFTPNKTPQPPPPSPPMKLELKIAISEAEQSRATEKITSVSPRPPIRQWRTQCNSLAPVSKSSLGRSYSCPDLGPPDPGSWPPVPSQPSQSRPRRHTVGCGEMARTPPPPRPCLRKEVFPLGGVGVSPSLTTSCSANAPASFFCEPAEPRLGSTKGKELRASKDKVFSDPETKTMGKVSRFRIRRTPVRLQPNLTPMGLPRPIRLNKKEFTLEEIYTNKNYQSPTTRRTFETIFEEPRERNGTLIFTSSRKLRRAVEFRDSSLPRSRRPSRGVRTAASRTLTPNLAPSQDVGSLLQERLRELDALLLEEETDKEHPCHL</sequence>
<keyword id="KW-0007">Acetylation</keyword>
<keyword id="KW-0158">Chromosome</keyword>
<keyword id="KW-0517">Myogenesis</keyword>
<keyword id="KW-0539">Nucleus</keyword>
<keyword id="KW-0597">Phosphoprotein</keyword>
<keyword id="KW-1185">Reference proteome</keyword>
<reference key="1">
    <citation type="journal article" date="2005" name="Science">
        <title>The transcriptional landscape of the mammalian genome.</title>
        <authorList>
            <person name="Carninci P."/>
            <person name="Kasukawa T."/>
            <person name="Katayama S."/>
            <person name="Gough J."/>
            <person name="Frith M.C."/>
            <person name="Maeda N."/>
            <person name="Oyama R."/>
            <person name="Ravasi T."/>
            <person name="Lenhard B."/>
            <person name="Wells C."/>
            <person name="Kodzius R."/>
            <person name="Shimokawa K."/>
            <person name="Bajic V.B."/>
            <person name="Brenner S.E."/>
            <person name="Batalov S."/>
            <person name="Forrest A.R."/>
            <person name="Zavolan M."/>
            <person name="Davis M.J."/>
            <person name="Wilming L.G."/>
            <person name="Aidinis V."/>
            <person name="Allen J.E."/>
            <person name="Ambesi-Impiombato A."/>
            <person name="Apweiler R."/>
            <person name="Aturaliya R.N."/>
            <person name="Bailey T.L."/>
            <person name="Bansal M."/>
            <person name="Baxter L."/>
            <person name="Beisel K.W."/>
            <person name="Bersano T."/>
            <person name="Bono H."/>
            <person name="Chalk A.M."/>
            <person name="Chiu K.P."/>
            <person name="Choudhary V."/>
            <person name="Christoffels A."/>
            <person name="Clutterbuck D.R."/>
            <person name="Crowe M.L."/>
            <person name="Dalla E."/>
            <person name="Dalrymple B.P."/>
            <person name="de Bono B."/>
            <person name="Della Gatta G."/>
            <person name="di Bernardo D."/>
            <person name="Down T."/>
            <person name="Engstrom P."/>
            <person name="Fagiolini M."/>
            <person name="Faulkner G."/>
            <person name="Fletcher C.F."/>
            <person name="Fukushima T."/>
            <person name="Furuno M."/>
            <person name="Futaki S."/>
            <person name="Gariboldi M."/>
            <person name="Georgii-Hemming P."/>
            <person name="Gingeras T.R."/>
            <person name="Gojobori T."/>
            <person name="Green R.E."/>
            <person name="Gustincich S."/>
            <person name="Harbers M."/>
            <person name="Hayashi Y."/>
            <person name="Hensch T.K."/>
            <person name="Hirokawa N."/>
            <person name="Hill D."/>
            <person name="Huminiecki L."/>
            <person name="Iacono M."/>
            <person name="Ikeo K."/>
            <person name="Iwama A."/>
            <person name="Ishikawa T."/>
            <person name="Jakt M."/>
            <person name="Kanapin A."/>
            <person name="Katoh M."/>
            <person name="Kawasawa Y."/>
            <person name="Kelso J."/>
            <person name="Kitamura H."/>
            <person name="Kitano H."/>
            <person name="Kollias G."/>
            <person name="Krishnan S.P."/>
            <person name="Kruger A."/>
            <person name="Kummerfeld S.K."/>
            <person name="Kurochkin I.V."/>
            <person name="Lareau L.F."/>
            <person name="Lazarevic D."/>
            <person name="Lipovich L."/>
            <person name="Liu J."/>
            <person name="Liuni S."/>
            <person name="McWilliam S."/>
            <person name="Madan Babu M."/>
            <person name="Madera M."/>
            <person name="Marchionni L."/>
            <person name="Matsuda H."/>
            <person name="Matsuzawa S."/>
            <person name="Miki H."/>
            <person name="Mignone F."/>
            <person name="Miyake S."/>
            <person name="Morris K."/>
            <person name="Mottagui-Tabar S."/>
            <person name="Mulder N."/>
            <person name="Nakano N."/>
            <person name="Nakauchi H."/>
            <person name="Ng P."/>
            <person name="Nilsson R."/>
            <person name="Nishiguchi S."/>
            <person name="Nishikawa S."/>
            <person name="Nori F."/>
            <person name="Ohara O."/>
            <person name="Okazaki Y."/>
            <person name="Orlando V."/>
            <person name="Pang K.C."/>
            <person name="Pavan W.J."/>
            <person name="Pavesi G."/>
            <person name="Pesole G."/>
            <person name="Petrovsky N."/>
            <person name="Piazza S."/>
            <person name="Reed J."/>
            <person name="Reid J.F."/>
            <person name="Ring B.Z."/>
            <person name="Ringwald M."/>
            <person name="Rost B."/>
            <person name="Ruan Y."/>
            <person name="Salzberg S.L."/>
            <person name="Sandelin A."/>
            <person name="Schneider C."/>
            <person name="Schoenbach C."/>
            <person name="Sekiguchi K."/>
            <person name="Semple C.A."/>
            <person name="Seno S."/>
            <person name="Sessa L."/>
            <person name="Sheng Y."/>
            <person name="Shibata Y."/>
            <person name="Shimada H."/>
            <person name="Shimada K."/>
            <person name="Silva D."/>
            <person name="Sinclair B."/>
            <person name="Sperling S."/>
            <person name="Stupka E."/>
            <person name="Sugiura K."/>
            <person name="Sultana R."/>
            <person name="Takenaka Y."/>
            <person name="Taki K."/>
            <person name="Tammoja K."/>
            <person name="Tan S.L."/>
            <person name="Tang S."/>
            <person name="Taylor M.S."/>
            <person name="Tegner J."/>
            <person name="Teichmann S.A."/>
            <person name="Ueda H.R."/>
            <person name="van Nimwegen E."/>
            <person name="Verardo R."/>
            <person name="Wei C.L."/>
            <person name="Yagi K."/>
            <person name="Yamanishi H."/>
            <person name="Zabarovsky E."/>
            <person name="Zhu S."/>
            <person name="Zimmer A."/>
            <person name="Hide W."/>
            <person name="Bult C."/>
            <person name="Grimmond S.M."/>
            <person name="Teasdale R.D."/>
            <person name="Liu E.T."/>
            <person name="Brusic V."/>
            <person name="Quackenbush J."/>
            <person name="Wahlestedt C."/>
            <person name="Mattick J.S."/>
            <person name="Hume D.A."/>
            <person name="Kai C."/>
            <person name="Sasaki D."/>
            <person name="Tomaru Y."/>
            <person name="Fukuda S."/>
            <person name="Kanamori-Katayama M."/>
            <person name="Suzuki M."/>
            <person name="Aoki J."/>
            <person name="Arakawa T."/>
            <person name="Iida J."/>
            <person name="Imamura K."/>
            <person name="Itoh M."/>
            <person name="Kato T."/>
            <person name="Kawaji H."/>
            <person name="Kawagashira N."/>
            <person name="Kawashima T."/>
            <person name="Kojima M."/>
            <person name="Kondo S."/>
            <person name="Konno H."/>
            <person name="Nakano K."/>
            <person name="Ninomiya N."/>
            <person name="Nishio T."/>
            <person name="Okada M."/>
            <person name="Plessy C."/>
            <person name="Shibata K."/>
            <person name="Shiraki T."/>
            <person name="Suzuki S."/>
            <person name="Tagami M."/>
            <person name="Waki K."/>
            <person name="Watahiki A."/>
            <person name="Okamura-Oho Y."/>
            <person name="Suzuki H."/>
            <person name="Kawai J."/>
            <person name="Hayashizaki Y."/>
        </authorList>
    </citation>
    <scope>NUCLEOTIDE SEQUENCE [LARGE SCALE MRNA]</scope>
    <source>
        <strain>C57BL/6J</strain>
        <tissue>Bone marrow</tissue>
        <tissue>Egg</tissue>
    </source>
</reference>
<reference key="2">
    <citation type="journal article" date="2004" name="Genome Res.">
        <title>The status, quality, and expansion of the NIH full-length cDNA project: the Mammalian Gene Collection (MGC).</title>
        <authorList>
            <consortium name="The MGC Project Team"/>
        </authorList>
    </citation>
    <scope>NUCLEOTIDE SEQUENCE [LARGE SCALE MRNA]</scope>
    <source>
        <strain>Czech II</strain>
        <tissue>Mammary tumor</tissue>
        <tissue>Olfactory epithelium</tissue>
    </source>
</reference>
<reference key="3">
    <citation type="journal article" date="2015" name="Cell Death Dis.">
        <title>A novel role of PRR14 in the regulation of skeletal myogenesis.</title>
        <authorList>
            <person name="Yang M."/>
            <person name="Yuan Z.M."/>
        </authorList>
    </citation>
    <scope>FUNCTION</scope>
    <scope>DEVELOPMENTAL STAGE</scope>
</reference>
<dbReference type="EMBL" id="AK139559">
    <property type="protein sequence ID" value="BAE24061.1"/>
    <property type="molecule type" value="mRNA"/>
</dbReference>
<dbReference type="EMBL" id="AK145816">
    <property type="protein sequence ID" value="BAE26669.1"/>
    <property type="molecule type" value="mRNA"/>
</dbReference>
<dbReference type="EMBL" id="AK151203">
    <property type="protein sequence ID" value="BAE30200.1"/>
    <property type="molecule type" value="mRNA"/>
</dbReference>
<dbReference type="EMBL" id="BC006909">
    <property type="protein sequence ID" value="AAH06909.1"/>
    <property type="status" value="ALT_SEQ"/>
    <property type="molecule type" value="mRNA"/>
</dbReference>
<dbReference type="EMBL" id="BC055033">
    <property type="protein sequence ID" value="AAH55033.1"/>
    <property type="molecule type" value="mRNA"/>
</dbReference>
<dbReference type="CCDS" id="CCDS21868.1"/>
<dbReference type="RefSeq" id="NP_001403019.1">
    <property type="nucleotide sequence ID" value="NM_001416090.1"/>
</dbReference>
<dbReference type="RefSeq" id="NP_663564.2">
    <property type="nucleotide sequence ID" value="NM_145589.2"/>
</dbReference>
<dbReference type="RefSeq" id="XP_006507804.1">
    <property type="nucleotide sequence ID" value="XM_006507741.3"/>
</dbReference>
<dbReference type="RefSeq" id="XP_006507805.1">
    <property type="nucleotide sequence ID" value="XM_006507742.3"/>
</dbReference>
<dbReference type="BioGRID" id="231469">
    <property type="interactions" value="3"/>
</dbReference>
<dbReference type="FunCoup" id="Q7TPN9">
    <property type="interactions" value="1011"/>
</dbReference>
<dbReference type="STRING" id="10090.ENSMUSP00000033095"/>
<dbReference type="GlyGen" id="Q7TPN9">
    <property type="glycosylation" value="2 sites, 1 O-linked glycan (1 site)"/>
</dbReference>
<dbReference type="iPTMnet" id="Q7TPN9"/>
<dbReference type="PhosphoSitePlus" id="Q7TPN9"/>
<dbReference type="jPOST" id="Q7TPN9"/>
<dbReference type="PaxDb" id="10090-ENSMUSP00000033095"/>
<dbReference type="PeptideAtlas" id="Q7TPN9"/>
<dbReference type="ProteomicsDB" id="291566"/>
<dbReference type="Pumba" id="Q7TPN9"/>
<dbReference type="Antibodypedia" id="66800">
    <property type="antibodies" value="69 antibodies from 18 providers"/>
</dbReference>
<dbReference type="DNASU" id="233895"/>
<dbReference type="Ensembl" id="ENSMUST00000033095.10">
    <property type="protein sequence ID" value="ENSMUSP00000033095.9"/>
    <property type="gene ID" value="ENSMUSG00000030822.16"/>
</dbReference>
<dbReference type="Ensembl" id="ENSMUST00000106292.8">
    <property type="protein sequence ID" value="ENSMUSP00000101899.2"/>
    <property type="gene ID" value="ENSMUSG00000030822.16"/>
</dbReference>
<dbReference type="GeneID" id="233895"/>
<dbReference type="KEGG" id="mmu:233895"/>
<dbReference type="UCSC" id="uc009jvo.1">
    <property type="organism name" value="mouse"/>
</dbReference>
<dbReference type="AGR" id="MGI:2384565"/>
<dbReference type="CTD" id="78994"/>
<dbReference type="MGI" id="MGI:2384565">
    <property type="gene designation" value="Prr14"/>
</dbReference>
<dbReference type="VEuPathDB" id="HostDB:ENSMUSG00000030822"/>
<dbReference type="eggNOG" id="ENOG502RJ6E">
    <property type="taxonomic scope" value="Eukaryota"/>
</dbReference>
<dbReference type="GeneTree" id="ENSGT00520000055626"/>
<dbReference type="HOGENOM" id="CLU_489653_0_0_1"/>
<dbReference type="InParanoid" id="Q7TPN9"/>
<dbReference type="OMA" id="MRIVHQP"/>
<dbReference type="OrthoDB" id="6163216at2759"/>
<dbReference type="PhylomeDB" id="Q7TPN9"/>
<dbReference type="TreeFam" id="TF328446"/>
<dbReference type="BioGRID-ORCS" id="233895">
    <property type="hits" value="1 hit in 79 CRISPR screens"/>
</dbReference>
<dbReference type="ChiTaRS" id="Prr14">
    <property type="organism name" value="mouse"/>
</dbReference>
<dbReference type="PRO" id="PR:Q7TPN9"/>
<dbReference type="Proteomes" id="UP000000589">
    <property type="component" value="Chromosome 7"/>
</dbReference>
<dbReference type="RNAct" id="Q7TPN9">
    <property type="molecule type" value="protein"/>
</dbReference>
<dbReference type="Bgee" id="ENSMUSG00000030822">
    <property type="expression patterns" value="Expressed in granulocyte and 253 other cell types or tissues"/>
</dbReference>
<dbReference type="ExpressionAtlas" id="Q7TPN9">
    <property type="expression patterns" value="baseline and differential"/>
</dbReference>
<dbReference type="GO" id="GO:0005694">
    <property type="term" value="C:chromosome"/>
    <property type="evidence" value="ECO:0007669"/>
    <property type="project" value="UniProtKB-SubCell"/>
</dbReference>
<dbReference type="GO" id="GO:0005652">
    <property type="term" value="C:nuclear lamina"/>
    <property type="evidence" value="ECO:0007669"/>
    <property type="project" value="UniProtKB-SubCell"/>
</dbReference>
<dbReference type="GO" id="GO:0005654">
    <property type="term" value="C:nucleoplasm"/>
    <property type="evidence" value="ECO:0007669"/>
    <property type="project" value="UniProtKB-SubCell"/>
</dbReference>
<dbReference type="GO" id="GO:0007517">
    <property type="term" value="P:muscle organ development"/>
    <property type="evidence" value="ECO:0007669"/>
    <property type="project" value="UniProtKB-KW"/>
</dbReference>
<dbReference type="InterPro" id="IPR026320">
    <property type="entry name" value="PRR14"/>
</dbReference>
<dbReference type="InterPro" id="IPR028149">
    <property type="entry name" value="Tantalus-like"/>
</dbReference>
<dbReference type="PANTHER" id="PTHR14522">
    <property type="entry name" value="EMO2-RELATED"/>
    <property type="match status" value="1"/>
</dbReference>
<dbReference type="PANTHER" id="PTHR14522:SF2">
    <property type="entry name" value="PROLINE-RICH PROTEIN 14"/>
    <property type="match status" value="1"/>
</dbReference>
<dbReference type="Pfam" id="PF15386">
    <property type="entry name" value="Tantalus"/>
    <property type="match status" value="1"/>
</dbReference>
<gene>
    <name type="primary">Prr14</name>
</gene>
<comment type="function">
    <text evidence="1 3">Functions in tethering peripheral heterochromatin to the nuclear lamina during interphase, possibly through the interaction with heterochromatin protein CBX5/HP1 alpha (By similarity). Might play a role in reattaching heterochromatin to the nuclear lamina at mitotic exit (By similarity). Promotes myoblast differentiation during skeletal myogenesis, possibly by stimulating transcription factor MyoD activity via binding to CBX5/HP1 alpha (By similarity) (PubMed:25906157). Involved in the positive regulation of the PI3K-Akt-mTOR signaling pathway and in promoting cell proliferation, possibly via binding to GRB2 (By similarity).</text>
</comment>
<comment type="subunit">
    <text evidence="1">Interacts (via proline-rich region) with GRB2 (via SH3 domain 2). Interacts (via N-terminus) with CBX5.</text>
</comment>
<comment type="subcellular location">
    <subcellularLocation>
        <location evidence="1">Chromosome</location>
    </subcellularLocation>
    <subcellularLocation>
        <location evidence="1">Nucleus</location>
    </subcellularLocation>
    <subcellularLocation>
        <location evidence="1">Nucleus lamina</location>
    </subcellularLocation>
    <subcellularLocation>
        <location evidence="1">Nucleus</location>
        <location evidence="1">Nucleoplasm</location>
    </subcellularLocation>
    <text evidence="1">During interphase, associated with peripheral heterochromatin at the nuclear lamina. Released from the nuclear lamina in mitotic prophase and remains highly dispersed in metaphase. Associates with chromatin at the onset of anaphase and relocalizes to the nuclear lamina in telophase.</text>
</comment>
<comment type="developmental stage">
    <text evidence="3">Expressed in skeletal myocytes with increasing expression during differentiation and in the gastrocnemius skeletal muscle in newborn and at higher levels in 10 days old mice (at protein level).</text>
</comment>
<comment type="sequence caution" evidence="4">
    <conflict type="miscellaneous discrepancy">
        <sequence resource="EMBL-CDS" id="AAH06909"/>
    </conflict>
    <text>Chimeric cDNA.</text>
</comment>
<name>PRR14_MOUSE</name>
<evidence type="ECO:0000250" key="1">
    <source>
        <dbReference type="UniProtKB" id="Q9BWN1"/>
    </source>
</evidence>
<evidence type="ECO:0000256" key="2">
    <source>
        <dbReference type="SAM" id="MobiDB-lite"/>
    </source>
</evidence>
<evidence type="ECO:0000269" key="3">
    <source>
    </source>
</evidence>
<evidence type="ECO:0000305" key="4"/>
<accession>Q7TPN9</accession>
<accession>Q922N8</accession>
<protein>
    <recommendedName>
        <fullName>Proline-rich protein 14</fullName>
    </recommendedName>
</protein>
<feature type="chain" id="PRO_0000307270" description="Proline-rich protein 14">
    <location>
        <begin position="1"/>
        <end position="612"/>
    </location>
</feature>
<feature type="region of interest" description="Sufficient for heterochromatin association in interphase and chromatin association in anaphase" evidence="1">
    <location>
        <begin position="1"/>
        <end position="135"/>
    </location>
</feature>
<feature type="region of interest" description="Disordered" evidence="2">
    <location>
        <begin position="1"/>
        <end position="48"/>
    </location>
</feature>
<feature type="region of interest" description="Disordered" evidence="2">
    <location>
        <begin position="65"/>
        <end position="96"/>
    </location>
</feature>
<feature type="region of interest" description="Required for the interaction with GRB2 and sufficient to promote the phosphorylation of AKT and cell proliferation" evidence="1">
    <location>
        <begin position="85"/>
        <end position="405"/>
    </location>
</feature>
<feature type="region of interest" description="Disordered" evidence="2">
    <location>
        <begin position="119"/>
        <end position="150"/>
    </location>
</feature>
<feature type="region of interest" description="Required for nuclear lamina association" evidence="1">
    <location>
        <begin position="136"/>
        <end position="392"/>
    </location>
</feature>
<feature type="region of interest" description="Disordered" evidence="2">
    <location>
        <begin position="206"/>
        <end position="256"/>
    </location>
</feature>
<feature type="region of interest" description="Disordered" evidence="2">
    <location>
        <begin position="323"/>
        <end position="405"/>
    </location>
</feature>
<feature type="region of interest" description="Disordered" evidence="2">
    <location>
        <begin position="444"/>
        <end position="463"/>
    </location>
</feature>
<feature type="region of interest" description="Required for nuclear localization" evidence="1">
    <location>
        <begin position="546"/>
        <end position="563"/>
    </location>
</feature>
<feature type="region of interest" description="Disordered" evidence="2">
    <location>
        <begin position="553"/>
        <end position="583"/>
    </location>
</feature>
<feature type="compositionally biased region" description="Polar residues" evidence="2">
    <location>
        <begin position="1"/>
        <end position="15"/>
    </location>
</feature>
<feature type="compositionally biased region" description="Polar residues" evidence="2">
    <location>
        <begin position="86"/>
        <end position="96"/>
    </location>
</feature>
<feature type="compositionally biased region" description="Pro residues" evidence="2">
    <location>
        <begin position="243"/>
        <end position="252"/>
    </location>
</feature>
<feature type="compositionally biased region" description="Polar residues" evidence="2">
    <location>
        <begin position="342"/>
        <end position="359"/>
    </location>
</feature>
<feature type="compositionally biased region" description="Pro residues" evidence="2">
    <location>
        <begin position="366"/>
        <end position="379"/>
    </location>
</feature>
<feature type="compositionally biased region" description="Basic and acidic residues" evidence="2">
    <location>
        <begin position="448"/>
        <end position="463"/>
    </location>
</feature>
<feature type="compositionally biased region" description="Polar residues" evidence="2">
    <location>
        <begin position="570"/>
        <end position="583"/>
    </location>
</feature>
<feature type="modified residue" description="N-acetylmethionine" evidence="1">
    <location>
        <position position="1"/>
    </location>
</feature>
<feature type="modified residue" description="Phosphoserine" evidence="1">
    <location>
        <position position="307"/>
    </location>
</feature>
<organism>
    <name type="scientific">Mus musculus</name>
    <name type="common">Mouse</name>
    <dbReference type="NCBI Taxonomy" id="10090"/>
    <lineage>
        <taxon>Eukaryota</taxon>
        <taxon>Metazoa</taxon>
        <taxon>Chordata</taxon>
        <taxon>Craniata</taxon>
        <taxon>Vertebrata</taxon>
        <taxon>Euteleostomi</taxon>
        <taxon>Mammalia</taxon>
        <taxon>Eutheria</taxon>
        <taxon>Euarchontoglires</taxon>
        <taxon>Glires</taxon>
        <taxon>Rodentia</taxon>
        <taxon>Myomorpha</taxon>
        <taxon>Muroidea</taxon>
        <taxon>Muridae</taxon>
        <taxon>Murinae</taxon>
        <taxon>Mus</taxon>
        <taxon>Mus</taxon>
    </lineage>
</organism>